<keyword id="KW-0325">Glycoprotein</keyword>
<keyword id="KW-0472">Membrane</keyword>
<keyword id="KW-0732">Signal</keyword>
<keyword id="KW-0812">Transmembrane</keyword>
<keyword id="KW-1133">Transmembrane helix</keyword>
<keyword id="KW-0946">Virion</keyword>
<keyword id="KW-0843">Virulence</keyword>
<protein>
    <recommendedName>
        <fullName>Glycoprotein gp2</fullName>
    </recommendedName>
    <alternativeName>
        <fullName>Glycoprotein X</fullName>
        <shortName>GpX</shortName>
    </alternativeName>
</protein>
<dbReference type="EMBL" id="AY464052">
    <property type="protein sequence ID" value="AAS45959.1"/>
    <property type="molecule type" value="Genomic_DNA"/>
</dbReference>
<dbReference type="Proteomes" id="UP000008296">
    <property type="component" value="Segment"/>
</dbReference>
<dbReference type="GO" id="GO:0016020">
    <property type="term" value="C:membrane"/>
    <property type="evidence" value="ECO:0007669"/>
    <property type="project" value="UniProtKB-KW"/>
</dbReference>
<dbReference type="GO" id="GO:0055036">
    <property type="term" value="C:virion membrane"/>
    <property type="evidence" value="ECO:0007669"/>
    <property type="project" value="UniProtKB-SubCell"/>
</dbReference>
<dbReference type="GO" id="GO:0016032">
    <property type="term" value="P:viral process"/>
    <property type="evidence" value="ECO:0007669"/>
    <property type="project" value="InterPro"/>
</dbReference>
<dbReference type="InterPro" id="IPR010278">
    <property type="entry name" value="Varicellovirus_Gp2_glycop"/>
</dbReference>
<dbReference type="Pfam" id="PF05955">
    <property type="entry name" value="Herpes_gp2"/>
    <property type="match status" value="1"/>
</dbReference>
<reference evidence="4 5" key="1">
    <citation type="submission" date="2003-11" db="EMBL/GenBank/DDBJ databases">
        <authorList>
            <person name="Davis-Poynter N."/>
            <person name="Nugent J."/>
            <person name="Birch-Machin I."/>
            <person name="Allen G.P."/>
        </authorList>
    </citation>
    <scope>NUCLEOTIDE SEQUENCE [LARGE SCALE GENOMIC DNA]</scope>
</reference>
<name>GP2_EHV1V</name>
<organismHost>
    <name type="scientific">Equus caballus</name>
    <name type="common">Horse</name>
    <dbReference type="NCBI Taxonomy" id="9796"/>
</organismHost>
<proteinExistence type="inferred from homology"/>
<organism>
    <name type="scientific">Equine herpesvirus 1 (strain V592)</name>
    <name type="common">EHV-1</name>
    <name type="synonym">Equine abortion virus</name>
    <dbReference type="NCBI Taxonomy" id="310273"/>
    <lineage>
        <taxon>Viruses</taxon>
        <taxon>Duplodnaviria</taxon>
        <taxon>Heunggongvirae</taxon>
        <taxon>Peploviricota</taxon>
        <taxon>Herviviricetes</taxon>
        <taxon>Herpesvirales</taxon>
        <taxon>Orthoherpesviridae</taxon>
        <taxon>Alphaherpesvirinae</taxon>
        <taxon>Varicellovirus</taxon>
        <taxon>Varicellovirus equidalpha1</taxon>
        <taxon>Equid alphaherpesvirus 1</taxon>
    </lineage>
</organism>
<comment type="function">
    <text evidence="1">Virulence factor.</text>
</comment>
<comment type="subcellular location">
    <subcellularLocation>
        <location evidence="4">Virion membrane</location>
        <topology evidence="4">Single-pass membrane protein</topology>
    </subcellularLocation>
</comment>
<accession>Q6S6W0</accession>
<sequence>MGFIYARKLLLCMAVSIYAIGSTTTTETTTSSSSTSGSGQSTSSGTTNSSSSPTTSPPTTSSSPPTSTHTSSPSSTSTQSSSTAATSSSAPSTASSTTSIPTSTSTETTTTTPTASTTTPTTTTAAPTTAATTTAVTTAASTSAETTTATATATSTPTTTTPTSTTTTTATTTVPTTASTTTDTTTAATTTAATTTAATTTAATTTAATTTAATTTAATTTAATTTAATTTAATTTAATTSSATTAATTSSTTTAATTTAATTTAATTTAATTTAATTTAATTTAATTTAATTTAATTTAATTTAATTTAATTTAATTTAATTTAATTTGSPTSGSTSTTGASTSTPSASTATSATPTSTSTSAAATTSTPTPTSAATSAESTTEAPTSTPTTDTTTPSEATTATTSPESTTVSASTTSATTTAFTTESHTSPDSSTGSTSTAEPSSTFTLTPSTATPSTDQFTGSSASTESDSTDSSTVPTTGTESITESSSTTEASTNLGSSTYESTEALETPDGNTTSGNTTPSPSPRTPSFADTQQTPDNGVSTQHTTINDHTTANAQKHAGHHRGRAGGRRGSPQGGSHTTPHPDRLTPSPDDTYDDDTNHPNGRNNSIEIVPQLPPDRPIIELGVATLRKNFMEASCTVETNSGLAIFWKIGNASVDAFNRGTTHTRLMRNGVPVYALVSTLRVPWLNVIPLTKITCAACPTNLVAGDGVDLNSCTTKSTTIPCPGQQRTHIFFSAKGDRAVCITSELVSQPTITWSVGSDRLRNDGFSQTWYGIQPGVCGILRSEVRIHRTTWRFGSTSKDYLCEVSASDSKTSDYKVLPNAHSTSNFALVAATTLTVTILCLLCCLYCMLTRPRASVY</sequence>
<feature type="signal peptide" evidence="2">
    <location>
        <begin position="1"/>
        <end position="25"/>
    </location>
</feature>
<feature type="chain" id="PRO_0000038297" description="Glycoprotein gp2">
    <location>
        <begin position="26"/>
        <end position="866"/>
    </location>
</feature>
<feature type="transmembrane region" description="Helical" evidence="2">
    <location>
        <begin position="835"/>
        <end position="855"/>
    </location>
</feature>
<feature type="region of interest" description="Disordered" evidence="3">
    <location>
        <begin position="24"/>
        <end position="185"/>
    </location>
</feature>
<feature type="region of interest" description="Disordered" evidence="3">
    <location>
        <begin position="319"/>
        <end position="619"/>
    </location>
</feature>
<feature type="compositionally biased region" description="Low complexity" evidence="3">
    <location>
        <begin position="319"/>
        <end position="442"/>
    </location>
</feature>
<feature type="compositionally biased region" description="Polar residues" evidence="3">
    <location>
        <begin position="443"/>
        <end position="463"/>
    </location>
</feature>
<feature type="compositionally biased region" description="Low complexity" evidence="3">
    <location>
        <begin position="464"/>
        <end position="499"/>
    </location>
</feature>
<feature type="compositionally biased region" description="Low complexity" evidence="3">
    <location>
        <begin position="514"/>
        <end position="526"/>
    </location>
</feature>
<feature type="compositionally biased region" description="Polar residues" evidence="3">
    <location>
        <begin position="535"/>
        <end position="561"/>
    </location>
</feature>
<feature type="compositionally biased region" description="Basic residues" evidence="3">
    <location>
        <begin position="564"/>
        <end position="574"/>
    </location>
</feature>
<feature type="glycosylation site" description="N-linked (GlcNAc...) asparagine; by host" evidence="2">
    <location>
        <position position="48"/>
    </location>
</feature>
<feature type="glycosylation site" description="N-linked (GlcNAc...) asparagine; by host" evidence="2">
    <location>
        <position position="518"/>
    </location>
</feature>
<feature type="glycosylation site" description="N-linked (GlcNAc...) asparagine; by host" evidence="2">
    <location>
        <position position="611"/>
    </location>
</feature>
<feature type="glycosylation site" description="N-linked (GlcNAc...) asparagine; by host" evidence="2">
    <location>
        <position position="659"/>
    </location>
</feature>
<evidence type="ECO:0000250" key="1"/>
<evidence type="ECO:0000255" key="2"/>
<evidence type="ECO:0000256" key="3">
    <source>
        <dbReference type="SAM" id="MobiDB-lite"/>
    </source>
</evidence>
<evidence type="ECO:0000305" key="4"/>
<evidence type="ECO:0000312" key="5">
    <source>
        <dbReference type="EMBL" id="AAS45959.1"/>
    </source>
</evidence>
<gene>
    <name type="ordered locus">71</name>
</gene>